<proteinExistence type="inferred from homology"/>
<comment type="function">
    <text evidence="4 7">MFS-type transporter; part of the gene cluster that mediates the biosynthesis of pyriculol and pyriculariol, two heptaketides that induce lesion formation upon application on rice leaves but are dispensable for pathogenicity (PubMed:27902426). With the ABC transporter ABC7, is most likely responsible for pyriculol and pyriculariol secretion and thereby may contribute to intrinsic resistance (Probable).</text>
</comment>
<comment type="subcellular location">
    <subcellularLocation>
        <location evidence="1">Membrane</location>
        <topology evidence="1">Multi-pass membrane protein</topology>
    </subcellularLocation>
</comment>
<comment type="similarity">
    <text evidence="6">Belongs to the major facilitator superfamily. EmrB family.</text>
</comment>
<keyword id="KW-0325">Glycoprotein</keyword>
<keyword id="KW-0472">Membrane</keyword>
<keyword id="KW-1185">Reference proteome</keyword>
<keyword id="KW-0812">Transmembrane</keyword>
<keyword id="KW-1133">Transmembrane helix</keyword>
<keyword id="KW-0813">Transport</keyword>
<dbReference type="EMBL" id="CM001233">
    <property type="protein sequence ID" value="EHA52520.1"/>
    <property type="molecule type" value="Genomic_DNA"/>
</dbReference>
<dbReference type="RefSeq" id="XP_003712327.1">
    <property type="nucleotide sequence ID" value="XM_003712279.1"/>
</dbReference>
<dbReference type="SMR" id="G4N2A8"/>
<dbReference type="GlyCosmos" id="G4N2A8">
    <property type="glycosylation" value="2 sites, No reported glycans"/>
</dbReference>
<dbReference type="EnsemblFungi" id="MGG_04850T0">
    <property type="protein sequence ID" value="MGG_04850T0"/>
    <property type="gene ID" value="MGG_04850"/>
</dbReference>
<dbReference type="GeneID" id="2675423"/>
<dbReference type="KEGG" id="mgr:MGG_04850"/>
<dbReference type="VEuPathDB" id="FungiDB:MGG_04850"/>
<dbReference type="eggNOG" id="KOG0254">
    <property type="taxonomic scope" value="Eukaryota"/>
</dbReference>
<dbReference type="HOGENOM" id="CLU_000960_27_5_1"/>
<dbReference type="InParanoid" id="G4N2A8"/>
<dbReference type="OMA" id="IRFLAHI"/>
<dbReference type="OrthoDB" id="2130629at2759"/>
<dbReference type="Proteomes" id="UP000009058">
    <property type="component" value="Chromosome 3"/>
</dbReference>
<dbReference type="GO" id="GO:0016020">
    <property type="term" value="C:membrane"/>
    <property type="evidence" value="ECO:0007669"/>
    <property type="project" value="UniProtKB-SubCell"/>
</dbReference>
<dbReference type="GO" id="GO:0022857">
    <property type="term" value="F:transmembrane transporter activity"/>
    <property type="evidence" value="ECO:0007669"/>
    <property type="project" value="InterPro"/>
</dbReference>
<dbReference type="Gene3D" id="1.20.1250.20">
    <property type="entry name" value="MFS general substrate transporter like domains"/>
    <property type="match status" value="2"/>
</dbReference>
<dbReference type="InterPro" id="IPR011701">
    <property type="entry name" value="MFS"/>
</dbReference>
<dbReference type="InterPro" id="IPR020846">
    <property type="entry name" value="MFS_dom"/>
</dbReference>
<dbReference type="InterPro" id="IPR036259">
    <property type="entry name" value="MFS_trans_sf"/>
</dbReference>
<dbReference type="PANTHER" id="PTHR42718">
    <property type="entry name" value="MAJOR FACILITATOR SUPERFAMILY MULTIDRUG TRANSPORTER MFSC"/>
    <property type="match status" value="1"/>
</dbReference>
<dbReference type="PANTHER" id="PTHR42718:SF10">
    <property type="entry name" value="TRANSPORTER, PUTATIVE (AFU_ORTHOLOGUE AFUA_8G06760)-RELATED"/>
    <property type="match status" value="1"/>
</dbReference>
<dbReference type="Pfam" id="PF07690">
    <property type="entry name" value="MFS_1"/>
    <property type="match status" value="1"/>
</dbReference>
<dbReference type="SUPFAM" id="SSF103473">
    <property type="entry name" value="MFS general substrate transporter"/>
    <property type="match status" value="1"/>
</dbReference>
<dbReference type="PROSITE" id="PS50850">
    <property type="entry name" value="MFS"/>
    <property type="match status" value="1"/>
</dbReference>
<evidence type="ECO:0000255" key="1"/>
<evidence type="ECO:0000255" key="2">
    <source>
        <dbReference type="PROSITE-ProRule" id="PRU00498"/>
    </source>
</evidence>
<evidence type="ECO:0000256" key="3">
    <source>
        <dbReference type="SAM" id="MobiDB-lite"/>
    </source>
</evidence>
<evidence type="ECO:0000269" key="4">
    <source>
    </source>
</evidence>
<evidence type="ECO:0000303" key="5">
    <source>
    </source>
</evidence>
<evidence type="ECO:0000305" key="6"/>
<evidence type="ECO:0000305" key="7">
    <source>
    </source>
</evidence>
<accession>G4N2A8</accession>
<organism>
    <name type="scientific">Pyricularia oryzae (strain 70-15 / ATCC MYA-4617 / FGSC 8958)</name>
    <name type="common">Rice blast fungus</name>
    <name type="synonym">Magnaporthe oryzae</name>
    <dbReference type="NCBI Taxonomy" id="242507"/>
    <lineage>
        <taxon>Eukaryota</taxon>
        <taxon>Fungi</taxon>
        <taxon>Dikarya</taxon>
        <taxon>Ascomycota</taxon>
        <taxon>Pezizomycotina</taxon>
        <taxon>Sordariomycetes</taxon>
        <taxon>Sordariomycetidae</taxon>
        <taxon>Magnaporthales</taxon>
        <taxon>Pyriculariaceae</taxon>
        <taxon>Pyricularia</taxon>
    </lineage>
</organism>
<reference key="1">
    <citation type="journal article" date="2005" name="Nature">
        <title>The genome sequence of the rice blast fungus Magnaporthe grisea.</title>
        <authorList>
            <person name="Dean R.A."/>
            <person name="Talbot N.J."/>
            <person name="Ebbole D.J."/>
            <person name="Farman M.L."/>
            <person name="Mitchell T.K."/>
            <person name="Orbach M.J."/>
            <person name="Thon M.R."/>
            <person name="Kulkarni R."/>
            <person name="Xu J.-R."/>
            <person name="Pan H."/>
            <person name="Read N.D."/>
            <person name="Lee Y.-H."/>
            <person name="Carbone I."/>
            <person name="Brown D."/>
            <person name="Oh Y.Y."/>
            <person name="Donofrio N."/>
            <person name="Jeong J.S."/>
            <person name="Soanes D.M."/>
            <person name="Djonovic S."/>
            <person name="Kolomiets E."/>
            <person name="Rehmeyer C."/>
            <person name="Li W."/>
            <person name="Harding M."/>
            <person name="Kim S."/>
            <person name="Lebrun M.-H."/>
            <person name="Bohnert H."/>
            <person name="Coughlan S."/>
            <person name="Butler J."/>
            <person name="Calvo S.E."/>
            <person name="Ma L.-J."/>
            <person name="Nicol R."/>
            <person name="Purcell S."/>
            <person name="Nusbaum C."/>
            <person name="Galagan J.E."/>
            <person name="Birren B.W."/>
        </authorList>
    </citation>
    <scope>NUCLEOTIDE SEQUENCE [LARGE SCALE GENOMIC DNA]</scope>
    <source>
        <strain>70-15 / ATCC MYA-4617 / FGSC 8958</strain>
    </source>
</reference>
<reference key="2">
    <citation type="journal article" date="2017" name="Microbiology">
        <title>Unravelling the biosynthesis of pyriculol in the rice blast fungus Magnaporthe oryzae.</title>
        <authorList>
            <person name="Jacob S."/>
            <person name="Groetsch T."/>
            <person name="Foster A.J."/>
            <person name="Schueffler A."/>
            <person name="Rieger P.H."/>
            <person name="Sandjo L.P."/>
            <person name="Liermann J.C."/>
            <person name="Opatz T."/>
            <person name="Thines E."/>
        </authorList>
    </citation>
    <scope>IDENTIFICATION</scope>
    <scope>FUNCTION</scope>
</reference>
<feature type="chain" id="PRO_0000446273" description="MFS-type transporter 1">
    <location>
        <begin position="1"/>
        <end position="615"/>
    </location>
</feature>
<feature type="transmembrane region" description="Helical" evidence="1">
    <location>
        <begin position="94"/>
        <end position="114"/>
    </location>
</feature>
<feature type="transmembrane region" description="Helical" evidence="1">
    <location>
        <begin position="138"/>
        <end position="158"/>
    </location>
</feature>
<feature type="transmembrane region" description="Helical" evidence="1">
    <location>
        <begin position="162"/>
        <end position="182"/>
    </location>
</feature>
<feature type="transmembrane region" description="Helical" evidence="1">
    <location>
        <begin position="192"/>
        <end position="212"/>
    </location>
</feature>
<feature type="transmembrane region" description="Helical" evidence="1">
    <location>
        <begin position="222"/>
        <end position="242"/>
    </location>
</feature>
<feature type="transmembrane region" description="Helical" evidence="1">
    <location>
        <begin position="251"/>
        <end position="271"/>
    </location>
</feature>
<feature type="transmembrane region" description="Helical" evidence="1">
    <location>
        <begin position="320"/>
        <end position="340"/>
    </location>
</feature>
<feature type="transmembrane region" description="Helical" evidence="1">
    <location>
        <begin position="351"/>
        <end position="371"/>
    </location>
</feature>
<feature type="transmembrane region" description="Helical" evidence="1">
    <location>
        <begin position="397"/>
        <end position="417"/>
    </location>
</feature>
<feature type="transmembrane region" description="Helical" evidence="1">
    <location>
        <begin position="432"/>
        <end position="452"/>
    </location>
</feature>
<feature type="transmembrane region" description="Helical" evidence="1">
    <location>
        <begin position="455"/>
        <end position="475"/>
    </location>
</feature>
<feature type="transmembrane region" description="Helical" evidence="1">
    <location>
        <begin position="488"/>
        <end position="508"/>
    </location>
</feature>
<feature type="transmembrane region" description="Helical" evidence="1">
    <location>
        <begin position="522"/>
        <end position="542"/>
    </location>
</feature>
<feature type="transmembrane region" description="Helical" evidence="1">
    <location>
        <begin position="585"/>
        <end position="605"/>
    </location>
</feature>
<feature type="region of interest" description="Disordered" evidence="3">
    <location>
        <begin position="1"/>
        <end position="85"/>
    </location>
</feature>
<feature type="compositionally biased region" description="Polar residues" evidence="3">
    <location>
        <begin position="16"/>
        <end position="53"/>
    </location>
</feature>
<feature type="glycosylation site" description="N-linked (GlcNAc...) asparagine" evidence="2">
    <location>
        <position position="25"/>
    </location>
</feature>
<feature type="glycosylation site" description="N-linked (GlcNAc...) asparagine" evidence="2">
    <location>
        <position position="302"/>
    </location>
</feature>
<name>MFS1_PYRO7</name>
<gene>
    <name evidence="5" type="primary">MFS1</name>
    <name type="ORF">MGG_04850</name>
</gene>
<protein>
    <recommendedName>
        <fullName evidence="5">MFS-type transporter 1</fullName>
    </recommendedName>
    <alternativeName>
        <fullName evidence="5">Pyriculol/pyriculariol biosynthesis cluster protein MFS1</fullName>
    </alternativeName>
</protein>
<sequence length="615" mass="64730">MTALAAVPDLQDAAGPSTTTVHSPNYSGSPADISSSPTTRAVSRNTARQTASAPPNHAESSPPGNASPTGPPSPSGNNVSPHGRHQGMSKLRACLVIATLSGVSFLNTMGSGILTVSLPTMARDVRLDDSLLLWPASVYSLAAGCTLLVFGAVGHIIGPKRVWITGACLYAAFTLGVGRSATGSQLIAFRSVLGVSIAMCLPTAVSLTTNGFGAGRWRNMAFAFQGMGQPLGYSTGLILGGIFTDTVGWRFGFYISGGINAVLAICALVVLPSPPRHDEGDGEQREVEEEATDATVAAAAVNRSSRSRPLISRLAHDVDWTGTLAISASMGFLSYVFSVVSKDYDRMAAPQNIALLVAAALLLPTFTLWVGRQERLDRPALIPNSLWRKAAFSSTCAAVFFTWAVFNAFQYFSALYFERIEHITALQTSLRFLPMVLVGAATNIVTGYLVETVEVRWLVVVSAIFSLFSPLIMALVRPGWGYWKGAFFAMLLSPLHPDVLFTVSNLIISRVYDGRSQSLAGAVFNAVSQVGNSVGLGLTAVVSSAVARSYHGSGGVGNAMDPPTGRPQHLPSSPTVEATLAGYHAAFWLMFGAAALVTVITFLGLRRGGKVGAVE</sequence>